<comment type="function">
    <text evidence="1">Catalyzes the transfer of the L-Ara4N moiety of the glycolipid undecaprenyl phosphate-alpha-L-Ara4N to lipid A. The modified arabinose is attached to lipid A and is required for resistance to polymyxin and cationic antimicrobial peptides.</text>
</comment>
<comment type="catalytic activity">
    <reaction evidence="1">
        <text>4-amino-4-deoxy-alpha-L-arabinopyranosyl di-trans,octa-cis-undecaprenyl phosphate + lipid IVA = lipid IIA + di-trans,octa-cis-undecaprenyl phosphate.</text>
        <dbReference type="EC" id="2.4.2.43"/>
    </reaction>
</comment>
<comment type="pathway">
    <text evidence="1">Lipopolysaccharide metabolism; 4-amino-4-deoxy-beta-L-arabinose-lipid A biosynthesis.</text>
</comment>
<comment type="subcellular location">
    <subcellularLocation>
        <location evidence="1">Cell inner membrane</location>
        <topology evidence="1">Multi-pass membrane protein</topology>
    </subcellularLocation>
</comment>
<comment type="similarity">
    <text evidence="1">Belongs to the glycosyltransferase 83 family.</text>
</comment>
<reference key="1">
    <citation type="journal article" date="2006" name="J. Bacteriol.">
        <title>Complete genome sequence of Yersinia pestis strains Antiqua and Nepal516: evidence of gene reduction in an emerging pathogen.</title>
        <authorList>
            <person name="Chain P.S.G."/>
            <person name="Hu P."/>
            <person name="Malfatti S.A."/>
            <person name="Radnedge L."/>
            <person name="Larimer F."/>
            <person name="Vergez L.M."/>
            <person name="Worsham P."/>
            <person name="Chu M.C."/>
            <person name="Andersen G.L."/>
        </authorList>
    </citation>
    <scope>NUCLEOTIDE SEQUENCE [LARGE SCALE GENOMIC DNA]</scope>
    <source>
        <strain>Nepal516</strain>
    </source>
</reference>
<reference key="2">
    <citation type="submission" date="2009-04" db="EMBL/GenBank/DDBJ databases">
        <title>Yersinia pestis Nepal516A whole genome shotgun sequencing project.</title>
        <authorList>
            <person name="Plunkett G. III"/>
            <person name="Anderson B.D."/>
            <person name="Baumler D.J."/>
            <person name="Burland V."/>
            <person name="Cabot E.L."/>
            <person name="Glasner J.D."/>
            <person name="Mau B."/>
            <person name="Neeno-Eckwall E."/>
            <person name="Perna N.T."/>
            <person name="Munk A.C."/>
            <person name="Tapia R."/>
            <person name="Green L.D."/>
            <person name="Rogers Y.C."/>
            <person name="Detter J.C."/>
            <person name="Bruce D.C."/>
            <person name="Brettin T.S."/>
        </authorList>
    </citation>
    <scope>NUCLEOTIDE SEQUENCE [LARGE SCALE GENOMIC DNA]</scope>
    <source>
        <strain>Nepal516</strain>
    </source>
</reference>
<protein>
    <recommendedName>
        <fullName evidence="1">Undecaprenyl phosphate-alpha-4-amino-4-deoxy-L-arabinose arabinosyl transferase</fullName>
        <ecNumber evidence="1">2.4.2.43</ecNumber>
    </recommendedName>
    <alternativeName>
        <fullName evidence="1">4-amino-4-deoxy-L-arabinose lipid A transferase</fullName>
    </alternativeName>
    <alternativeName>
        <fullName evidence="1">Lipid IV(A) 4-amino-4-deoxy-L-arabinosyltransferase</fullName>
    </alternativeName>
    <alternativeName>
        <fullName evidence="1">Undecaprenyl phosphate-alpha-L-Ara4N transferase</fullName>
    </alternativeName>
</protein>
<sequence>MKLLKDSGAALLALFFVLVYLLPVNSRLLWQPDETRYAEISREMLQRGDWVVPYFMDIRYFEKPVAGYWFNNISQWIFGDSNFAVRFGSIFSTALSAVLVYWLATLLWRNRSTSVLATLIYLSFLLVFGIGTYAVLDPMISLWLTAAMVSFYLTLKAENWQQKVGAYALLGVACGMGFMTKGFLALAVPVIAVLPIVIQQKRIKDLVVFGPIAIVCAVLLSLPWALAIAQREPDFWNYFFWVEHIQRFAEASAQHKSPIWYYLPILCIGVLPWLGLLPGALFKGWRERATKPELFFLLSWVVMPLLFFSVAKGKLPTYILPCMAPLSLLMAAYATDCANNIRMRALKINGVINLLFGVACALVIVVIGLGLVKDIVAYGPQENQKVWLGVLAFAGWGVTGFITLRNNARNWRWAAACPLLFILLVGYLIPQQVVDSKQPQNFIKNNFSELSSSRYVLTDSVGVAAGLAWELKRSDILMFSEKGELTYGLAYPDSQDNYISNDDFPTWLAQARKEGDVSLVVQLAKNEALPAHLPPADKVNLMNRLALLWYQKTP</sequence>
<gene>
    <name evidence="1" type="primary">arnT</name>
    <name type="ordered locus">YPN_1872</name>
    <name type="ORF">YP516_2083</name>
</gene>
<accession>Q1CIH9</accession>
<accession>C4GTH5</accession>
<proteinExistence type="inferred from homology"/>
<feature type="chain" id="PRO_1000065671" description="Undecaprenyl phosphate-alpha-4-amino-4-deoxy-L-arabinose arabinosyl transferase">
    <location>
        <begin position="1"/>
        <end position="554"/>
    </location>
</feature>
<feature type="transmembrane region" description="Helical" evidence="1">
    <location>
        <begin position="4"/>
        <end position="24"/>
    </location>
</feature>
<feature type="transmembrane region" description="Helical" evidence="1">
    <location>
        <begin position="87"/>
        <end position="107"/>
    </location>
</feature>
<feature type="transmembrane region" description="Helical" evidence="1">
    <location>
        <begin position="115"/>
        <end position="135"/>
    </location>
</feature>
<feature type="transmembrane region" description="Helical" evidence="1">
    <location>
        <begin position="178"/>
        <end position="198"/>
    </location>
</feature>
<feature type="transmembrane region" description="Helical" evidence="1">
    <location>
        <begin position="206"/>
        <end position="226"/>
    </location>
</feature>
<feature type="transmembrane region" description="Helical" evidence="1">
    <location>
        <begin position="262"/>
        <end position="282"/>
    </location>
</feature>
<feature type="transmembrane region" description="Helical" evidence="1">
    <location>
        <begin position="293"/>
        <end position="313"/>
    </location>
</feature>
<feature type="transmembrane region" description="Helical" evidence="1">
    <location>
        <begin position="315"/>
        <end position="335"/>
    </location>
</feature>
<feature type="transmembrane region" description="Helical" evidence="1">
    <location>
        <begin position="351"/>
        <end position="371"/>
    </location>
</feature>
<feature type="transmembrane region" description="Helical" evidence="1">
    <location>
        <begin position="384"/>
        <end position="404"/>
    </location>
</feature>
<feature type="transmembrane region" description="Helical" evidence="1">
    <location>
        <begin position="414"/>
        <end position="434"/>
    </location>
</feature>
<organism>
    <name type="scientific">Yersinia pestis bv. Antiqua (strain Nepal516)</name>
    <dbReference type="NCBI Taxonomy" id="377628"/>
    <lineage>
        <taxon>Bacteria</taxon>
        <taxon>Pseudomonadati</taxon>
        <taxon>Pseudomonadota</taxon>
        <taxon>Gammaproteobacteria</taxon>
        <taxon>Enterobacterales</taxon>
        <taxon>Yersiniaceae</taxon>
        <taxon>Yersinia</taxon>
    </lineage>
</organism>
<dbReference type="EC" id="2.4.2.43" evidence="1"/>
<dbReference type="EMBL" id="CP000305">
    <property type="protein sequence ID" value="ABG18201.1"/>
    <property type="molecule type" value="Genomic_DNA"/>
</dbReference>
<dbReference type="EMBL" id="ACNQ01000010">
    <property type="protein sequence ID" value="EEO76776.1"/>
    <property type="molecule type" value="Genomic_DNA"/>
</dbReference>
<dbReference type="RefSeq" id="WP_002211821.1">
    <property type="nucleotide sequence ID" value="NZ_ACNQ01000010.1"/>
</dbReference>
<dbReference type="SMR" id="Q1CIH9"/>
<dbReference type="CAZy" id="GT83">
    <property type="family name" value="Glycosyltransferase Family 83"/>
</dbReference>
<dbReference type="GeneID" id="57976259"/>
<dbReference type="KEGG" id="ypn:YPN_1872"/>
<dbReference type="HOGENOM" id="CLU_019200_2_1_6"/>
<dbReference type="UniPathway" id="UPA00037"/>
<dbReference type="Proteomes" id="UP000008936">
    <property type="component" value="Chromosome"/>
</dbReference>
<dbReference type="GO" id="GO:0005886">
    <property type="term" value="C:plasma membrane"/>
    <property type="evidence" value="ECO:0007669"/>
    <property type="project" value="UniProtKB-SubCell"/>
</dbReference>
<dbReference type="GO" id="GO:0103015">
    <property type="term" value="F:4-amino-4-deoxy-L-arabinose transferase activity"/>
    <property type="evidence" value="ECO:0007669"/>
    <property type="project" value="UniProtKB-EC"/>
</dbReference>
<dbReference type="GO" id="GO:0000030">
    <property type="term" value="F:mannosyltransferase activity"/>
    <property type="evidence" value="ECO:0007669"/>
    <property type="project" value="InterPro"/>
</dbReference>
<dbReference type="GO" id="GO:0009245">
    <property type="term" value="P:lipid A biosynthetic process"/>
    <property type="evidence" value="ECO:0007669"/>
    <property type="project" value="UniProtKB-UniRule"/>
</dbReference>
<dbReference type="GO" id="GO:0009103">
    <property type="term" value="P:lipopolysaccharide biosynthetic process"/>
    <property type="evidence" value="ECO:0007669"/>
    <property type="project" value="UniProtKB-KW"/>
</dbReference>
<dbReference type="GO" id="GO:0006493">
    <property type="term" value="P:protein O-linked glycosylation"/>
    <property type="evidence" value="ECO:0007669"/>
    <property type="project" value="InterPro"/>
</dbReference>
<dbReference type="GO" id="GO:0010041">
    <property type="term" value="P:response to iron(III) ion"/>
    <property type="evidence" value="ECO:0007669"/>
    <property type="project" value="TreeGrafter"/>
</dbReference>
<dbReference type="HAMAP" id="MF_01165">
    <property type="entry name" value="ArnT_transfer"/>
    <property type="match status" value="1"/>
</dbReference>
<dbReference type="InterPro" id="IPR022839">
    <property type="entry name" value="ArnT_tfrase"/>
</dbReference>
<dbReference type="InterPro" id="IPR003342">
    <property type="entry name" value="Glyco_trans_39/83"/>
</dbReference>
<dbReference type="InterPro" id="IPR050297">
    <property type="entry name" value="LipidA_mod_glycosyltrf_83"/>
</dbReference>
<dbReference type="NCBIfam" id="NF009784">
    <property type="entry name" value="PRK13279.1"/>
    <property type="match status" value="1"/>
</dbReference>
<dbReference type="PANTHER" id="PTHR33908">
    <property type="entry name" value="MANNOSYLTRANSFERASE YKCB-RELATED"/>
    <property type="match status" value="1"/>
</dbReference>
<dbReference type="PANTHER" id="PTHR33908:SF3">
    <property type="entry name" value="UNDECAPRENYL PHOSPHATE-ALPHA-4-AMINO-4-DEOXY-L-ARABINOSE ARABINOSYL TRANSFERASE"/>
    <property type="match status" value="1"/>
</dbReference>
<dbReference type="Pfam" id="PF02366">
    <property type="entry name" value="PMT"/>
    <property type="match status" value="1"/>
</dbReference>
<keyword id="KW-0997">Cell inner membrane</keyword>
<keyword id="KW-1003">Cell membrane</keyword>
<keyword id="KW-0328">Glycosyltransferase</keyword>
<keyword id="KW-0441">Lipid A biosynthesis</keyword>
<keyword id="KW-0444">Lipid biosynthesis</keyword>
<keyword id="KW-0443">Lipid metabolism</keyword>
<keyword id="KW-0448">Lipopolysaccharide biosynthesis</keyword>
<keyword id="KW-0472">Membrane</keyword>
<keyword id="KW-0808">Transferase</keyword>
<keyword id="KW-0812">Transmembrane</keyword>
<keyword id="KW-1133">Transmembrane helix</keyword>
<name>ARNT_YERPN</name>
<evidence type="ECO:0000255" key="1">
    <source>
        <dbReference type="HAMAP-Rule" id="MF_01165"/>
    </source>
</evidence>